<reference key="1">
    <citation type="journal article" date="2001" name="Lancet">
        <title>Whole genome sequencing of meticillin-resistant Staphylococcus aureus.</title>
        <authorList>
            <person name="Kuroda M."/>
            <person name="Ohta T."/>
            <person name="Uchiyama I."/>
            <person name="Baba T."/>
            <person name="Yuzawa H."/>
            <person name="Kobayashi I."/>
            <person name="Cui L."/>
            <person name="Oguchi A."/>
            <person name="Aoki K."/>
            <person name="Nagai Y."/>
            <person name="Lian J.-Q."/>
            <person name="Ito T."/>
            <person name="Kanamori M."/>
            <person name="Matsumaru H."/>
            <person name="Maruyama A."/>
            <person name="Murakami H."/>
            <person name="Hosoyama A."/>
            <person name="Mizutani-Ui Y."/>
            <person name="Takahashi N.K."/>
            <person name="Sawano T."/>
            <person name="Inoue R."/>
            <person name="Kaito C."/>
            <person name="Sekimizu K."/>
            <person name="Hirakawa H."/>
            <person name="Kuhara S."/>
            <person name="Goto S."/>
            <person name="Yabuzaki J."/>
            <person name="Kanehisa M."/>
            <person name="Yamashita A."/>
            <person name="Oshima K."/>
            <person name="Furuya K."/>
            <person name="Yoshino C."/>
            <person name="Shiba T."/>
            <person name="Hattori M."/>
            <person name="Ogasawara N."/>
            <person name="Hayashi H."/>
            <person name="Hiramatsu K."/>
        </authorList>
    </citation>
    <scope>NUCLEOTIDE SEQUENCE [LARGE SCALE GENOMIC DNA]</scope>
    <source>
        <strain>Mu50 / ATCC 700699</strain>
    </source>
</reference>
<sequence length="729" mass="79563">MSKFIEPSVEEIKLEKVYQDMGLSDQEYEKVCDILGRQPNFTETGIFSVMWSEHCSYKHSKPFLKQFPTSGEHVLMGPGEGAGVVDIGDNQAVVFKVESHNHPSAIEPYQGAATGVGGIIRDIVSIGARPINLLNSLRFGELDNKQNQRLLKGVVKGIGGYGNCIGIPTTAGEIEFDERYDGNPLVNAMCVGVINHDMIQKGTAKGVGNSVIYVGLKTGRDGIHGATFASEELTEESESKRPSVQIGDPFVGKKLMEATLEAITFDELVGIQDMGAAGLTSSSSEMAAKGGSGLHLRLEQVPTREPGISPYEMMLSETQERMLLVVEKGNEQKFLDLFDKHELDSAVIGEVTDTNRFVLTYDDEVYADIPVEPLADEAPVYILEGEEKDYNTSKNDYTHIDVKDTFFKLLKHPTIASKHYLYDQYDQQVGANTIIKPGLQASVVRVEGTNKAIASTIDGEARYVYNNPYEGGKMVVAEAYRNLIAVGATPLAMTDCLNYGSPEKKEIYQQLIDSTKGMAEACDILKTPVVSGNVSLYNETKGTSIFPTPVVGMVGLIENVNYLNDFEPQVGDKLYLIGDTKDDFGGSQLEKLIYGKVNHEFESLDLSSEVEKGESIKTAIREGLLSHVQTVGKGGLLITLAKLSAHYGLGLKSSIDITNAQLFSETQGRYVVSVKSGKTLNIDNAIEIGLLTDSDNFKVTTPYTEISENVSDIKQIWEGAIAQCLTTQD</sequence>
<proteinExistence type="inferred from homology"/>
<dbReference type="EC" id="6.3.5.3" evidence="1"/>
<dbReference type="EMBL" id="BA000017">
    <property type="protein sequence ID" value="BAB57231.1"/>
    <property type="molecule type" value="Genomic_DNA"/>
</dbReference>
<dbReference type="RefSeq" id="WP_000032740.1">
    <property type="nucleotide sequence ID" value="NC_002758.2"/>
</dbReference>
<dbReference type="SMR" id="P65900"/>
<dbReference type="KEGG" id="sav:SAV1069"/>
<dbReference type="HOGENOM" id="CLU_003100_0_1_9"/>
<dbReference type="PhylomeDB" id="P65900"/>
<dbReference type="UniPathway" id="UPA00074">
    <property type="reaction ID" value="UER00128"/>
</dbReference>
<dbReference type="Proteomes" id="UP000002481">
    <property type="component" value="Chromosome"/>
</dbReference>
<dbReference type="GO" id="GO:0005737">
    <property type="term" value="C:cytoplasm"/>
    <property type="evidence" value="ECO:0007669"/>
    <property type="project" value="UniProtKB-SubCell"/>
</dbReference>
<dbReference type="GO" id="GO:0005524">
    <property type="term" value="F:ATP binding"/>
    <property type="evidence" value="ECO:0007669"/>
    <property type="project" value="UniProtKB-UniRule"/>
</dbReference>
<dbReference type="GO" id="GO:0000287">
    <property type="term" value="F:magnesium ion binding"/>
    <property type="evidence" value="ECO:0007669"/>
    <property type="project" value="UniProtKB-UniRule"/>
</dbReference>
<dbReference type="GO" id="GO:0004642">
    <property type="term" value="F:phosphoribosylformylglycinamidine synthase activity"/>
    <property type="evidence" value="ECO:0007669"/>
    <property type="project" value="UniProtKB-UniRule"/>
</dbReference>
<dbReference type="GO" id="GO:0006189">
    <property type="term" value="P:'de novo' IMP biosynthetic process"/>
    <property type="evidence" value="ECO:0007669"/>
    <property type="project" value="UniProtKB-UniRule"/>
</dbReference>
<dbReference type="CDD" id="cd02203">
    <property type="entry name" value="PurL_repeat1"/>
    <property type="match status" value="1"/>
</dbReference>
<dbReference type="CDD" id="cd02204">
    <property type="entry name" value="PurL_repeat2"/>
    <property type="match status" value="1"/>
</dbReference>
<dbReference type="FunFam" id="3.30.1330.10:FF:000004">
    <property type="entry name" value="Phosphoribosylformylglycinamidine synthase subunit PurL"/>
    <property type="match status" value="1"/>
</dbReference>
<dbReference type="Gene3D" id="3.90.650.10">
    <property type="entry name" value="PurM-like C-terminal domain"/>
    <property type="match status" value="2"/>
</dbReference>
<dbReference type="Gene3D" id="3.30.1330.10">
    <property type="entry name" value="PurM-like, N-terminal domain"/>
    <property type="match status" value="2"/>
</dbReference>
<dbReference type="HAMAP" id="MF_00420">
    <property type="entry name" value="PurL_2"/>
    <property type="match status" value="1"/>
</dbReference>
<dbReference type="InterPro" id="IPR010074">
    <property type="entry name" value="PRibForGlyAmidine_synth_PurL"/>
</dbReference>
<dbReference type="InterPro" id="IPR041609">
    <property type="entry name" value="PurL_linker"/>
</dbReference>
<dbReference type="InterPro" id="IPR010918">
    <property type="entry name" value="PurM-like_C_dom"/>
</dbReference>
<dbReference type="InterPro" id="IPR036676">
    <property type="entry name" value="PurM-like_C_sf"/>
</dbReference>
<dbReference type="InterPro" id="IPR016188">
    <property type="entry name" value="PurM-like_N"/>
</dbReference>
<dbReference type="InterPro" id="IPR036921">
    <property type="entry name" value="PurM-like_N_sf"/>
</dbReference>
<dbReference type="NCBIfam" id="TIGR01736">
    <property type="entry name" value="FGAM_synth_II"/>
    <property type="match status" value="1"/>
</dbReference>
<dbReference type="NCBIfam" id="NF002290">
    <property type="entry name" value="PRK01213.1"/>
    <property type="match status" value="1"/>
</dbReference>
<dbReference type="PANTHER" id="PTHR43555">
    <property type="entry name" value="PHOSPHORIBOSYLFORMYLGLYCINAMIDINE SYNTHASE SUBUNIT PURL"/>
    <property type="match status" value="1"/>
</dbReference>
<dbReference type="PANTHER" id="PTHR43555:SF1">
    <property type="entry name" value="PHOSPHORIBOSYLFORMYLGLYCINAMIDINE SYNTHASE SUBUNIT PURL"/>
    <property type="match status" value="1"/>
</dbReference>
<dbReference type="Pfam" id="PF00586">
    <property type="entry name" value="AIRS"/>
    <property type="match status" value="2"/>
</dbReference>
<dbReference type="Pfam" id="PF02769">
    <property type="entry name" value="AIRS_C"/>
    <property type="match status" value="1"/>
</dbReference>
<dbReference type="Pfam" id="PF18072">
    <property type="entry name" value="FGAR-AT_linker"/>
    <property type="match status" value="1"/>
</dbReference>
<dbReference type="PIRSF" id="PIRSF001587">
    <property type="entry name" value="FGAM_synthase_II"/>
    <property type="match status" value="1"/>
</dbReference>
<dbReference type="SUPFAM" id="SSF56042">
    <property type="entry name" value="PurM C-terminal domain-like"/>
    <property type="match status" value="2"/>
</dbReference>
<dbReference type="SUPFAM" id="SSF55326">
    <property type="entry name" value="PurM N-terminal domain-like"/>
    <property type="match status" value="2"/>
</dbReference>
<protein>
    <recommendedName>
        <fullName evidence="1">Phosphoribosylformylglycinamidine synthase subunit PurL</fullName>
        <shortName evidence="1">FGAM synthase</shortName>
        <ecNumber evidence="1">6.3.5.3</ecNumber>
    </recommendedName>
    <alternativeName>
        <fullName evidence="1">Formylglycinamide ribonucleotide amidotransferase subunit II</fullName>
        <shortName evidence="1">FGAR amidotransferase II</shortName>
        <shortName evidence="1">FGAR-AT II</shortName>
    </alternativeName>
    <alternativeName>
        <fullName evidence="1">Glutamine amidotransferase PurL</fullName>
    </alternativeName>
    <alternativeName>
        <fullName evidence="1">Phosphoribosylformylglycinamidine synthase subunit II</fullName>
    </alternativeName>
</protein>
<comment type="function">
    <text evidence="1">Part of the phosphoribosylformylglycinamidine synthase complex involved in the purines biosynthetic pathway. Catalyzes the ATP-dependent conversion of formylglycinamide ribonucleotide (FGAR) and glutamine to yield formylglycinamidine ribonucleotide (FGAM) and glutamate. The FGAM synthase complex is composed of three subunits. PurQ produces an ammonia molecule by converting glutamine to glutamate. PurL transfers the ammonia molecule to FGAR to form FGAM in an ATP-dependent manner. PurS interacts with PurQ and PurL and is thought to assist in the transfer of the ammonia molecule from PurQ to PurL.</text>
</comment>
<comment type="catalytic activity">
    <reaction evidence="1">
        <text>N(2)-formyl-N(1)-(5-phospho-beta-D-ribosyl)glycinamide + L-glutamine + ATP + H2O = 2-formamido-N(1)-(5-O-phospho-beta-D-ribosyl)acetamidine + L-glutamate + ADP + phosphate + H(+)</text>
        <dbReference type="Rhea" id="RHEA:17129"/>
        <dbReference type="ChEBI" id="CHEBI:15377"/>
        <dbReference type="ChEBI" id="CHEBI:15378"/>
        <dbReference type="ChEBI" id="CHEBI:29985"/>
        <dbReference type="ChEBI" id="CHEBI:30616"/>
        <dbReference type="ChEBI" id="CHEBI:43474"/>
        <dbReference type="ChEBI" id="CHEBI:58359"/>
        <dbReference type="ChEBI" id="CHEBI:147286"/>
        <dbReference type="ChEBI" id="CHEBI:147287"/>
        <dbReference type="ChEBI" id="CHEBI:456216"/>
        <dbReference type="EC" id="6.3.5.3"/>
    </reaction>
</comment>
<comment type="pathway">
    <text evidence="1">Purine metabolism; IMP biosynthesis via de novo pathway; 5-amino-1-(5-phospho-D-ribosyl)imidazole from N(2)-formyl-N(1)-(5-phospho-D-ribosyl)glycinamide: step 1/2.</text>
</comment>
<comment type="subunit">
    <text evidence="1">Monomer. Part of the FGAM synthase complex composed of 1 PurL, 1 PurQ and 2 PurS subunits.</text>
</comment>
<comment type="subcellular location">
    <subcellularLocation>
        <location evidence="1">Cytoplasm</location>
    </subcellularLocation>
</comment>
<comment type="similarity">
    <text evidence="1">Belongs to the FGAMS family.</text>
</comment>
<name>PURL_STAAM</name>
<keyword id="KW-0067">ATP-binding</keyword>
<keyword id="KW-0963">Cytoplasm</keyword>
<keyword id="KW-0436">Ligase</keyword>
<keyword id="KW-0460">Magnesium</keyword>
<keyword id="KW-0479">Metal-binding</keyword>
<keyword id="KW-0547">Nucleotide-binding</keyword>
<keyword id="KW-0658">Purine biosynthesis</keyword>
<evidence type="ECO:0000255" key="1">
    <source>
        <dbReference type="HAMAP-Rule" id="MF_00420"/>
    </source>
</evidence>
<feature type="chain" id="PRO_0000100486" description="Phosphoribosylformylglycinamidine synthase subunit PurL">
    <location>
        <begin position="1"/>
        <end position="729"/>
    </location>
</feature>
<feature type="active site" evidence="1">
    <location>
        <position position="54"/>
    </location>
</feature>
<feature type="active site" description="Proton acceptor" evidence="1">
    <location>
        <position position="100"/>
    </location>
</feature>
<feature type="binding site" evidence="1">
    <location>
        <position position="57"/>
    </location>
    <ligand>
        <name>ATP</name>
        <dbReference type="ChEBI" id="CHEBI:30616"/>
    </ligand>
</feature>
<feature type="binding site" evidence="1">
    <location>
        <position position="96"/>
    </location>
    <ligand>
        <name>ATP</name>
        <dbReference type="ChEBI" id="CHEBI:30616"/>
    </ligand>
</feature>
<feature type="binding site" evidence="1">
    <location>
        <position position="98"/>
    </location>
    <ligand>
        <name>Mg(2+)</name>
        <dbReference type="ChEBI" id="CHEBI:18420"/>
        <label>1</label>
    </ligand>
</feature>
<feature type="binding site" evidence="1">
    <location>
        <begin position="99"/>
        <end position="102"/>
    </location>
    <ligand>
        <name>substrate</name>
    </ligand>
</feature>
<feature type="binding site" evidence="1">
    <location>
        <position position="121"/>
    </location>
    <ligand>
        <name>substrate</name>
    </ligand>
</feature>
<feature type="binding site" evidence="1">
    <location>
        <position position="122"/>
    </location>
    <ligand>
        <name>Mg(2+)</name>
        <dbReference type="ChEBI" id="CHEBI:18420"/>
        <label>2</label>
    </ligand>
</feature>
<feature type="binding site" evidence="1">
    <location>
        <position position="245"/>
    </location>
    <ligand>
        <name>substrate</name>
    </ligand>
</feature>
<feature type="binding site" evidence="1">
    <location>
        <position position="273"/>
    </location>
    <ligand>
        <name>Mg(2+)</name>
        <dbReference type="ChEBI" id="CHEBI:18420"/>
        <label>2</label>
    </ligand>
</feature>
<feature type="binding site" evidence="1">
    <location>
        <begin position="317"/>
        <end position="319"/>
    </location>
    <ligand>
        <name>substrate</name>
    </ligand>
</feature>
<feature type="binding site" evidence="1">
    <location>
        <position position="495"/>
    </location>
    <ligand>
        <name>ATP</name>
        <dbReference type="ChEBI" id="CHEBI:30616"/>
    </ligand>
</feature>
<feature type="binding site" evidence="1">
    <location>
        <position position="532"/>
    </location>
    <ligand>
        <name>ATP</name>
        <dbReference type="ChEBI" id="CHEBI:30616"/>
    </ligand>
</feature>
<feature type="binding site" evidence="1">
    <location>
        <position position="533"/>
    </location>
    <ligand>
        <name>Mg(2+)</name>
        <dbReference type="ChEBI" id="CHEBI:18420"/>
        <label>1</label>
    </ligand>
</feature>
<feature type="binding site" evidence="1">
    <location>
        <position position="535"/>
    </location>
    <ligand>
        <name>substrate</name>
    </ligand>
</feature>
<gene>
    <name evidence="1" type="primary">purL</name>
    <name type="ordered locus">SAV1069</name>
</gene>
<organism>
    <name type="scientific">Staphylococcus aureus (strain Mu50 / ATCC 700699)</name>
    <dbReference type="NCBI Taxonomy" id="158878"/>
    <lineage>
        <taxon>Bacteria</taxon>
        <taxon>Bacillati</taxon>
        <taxon>Bacillota</taxon>
        <taxon>Bacilli</taxon>
        <taxon>Bacillales</taxon>
        <taxon>Staphylococcaceae</taxon>
        <taxon>Staphylococcus</taxon>
    </lineage>
</organism>
<accession>P65900</accession>
<accession>Q99V28</accession>